<accession>Q8DDX7</accession>
<dbReference type="EMBL" id="AE016795">
    <property type="protein sequence ID" value="AAO09332.1"/>
    <property type="molecule type" value="Genomic_DNA"/>
</dbReference>
<dbReference type="RefSeq" id="WP_011078898.1">
    <property type="nucleotide sequence ID" value="NC_004459.3"/>
</dbReference>
<dbReference type="SMR" id="Q8DDX7"/>
<dbReference type="GeneID" id="93895128"/>
<dbReference type="KEGG" id="vvu:VV1_0829"/>
<dbReference type="HOGENOM" id="CLU_069356_5_0_6"/>
<dbReference type="Proteomes" id="UP000002275">
    <property type="component" value="Chromosome 1"/>
</dbReference>
<dbReference type="GO" id="GO:0043590">
    <property type="term" value="C:bacterial nucleoid"/>
    <property type="evidence" value="ECO:0007669"/>
    <property type="project" value="UniProtKB-UniRule"/>
</dbReference>
<dbReference type="GO" id="GO:0005737">
    <property type="term" value="C:cytoplasm"/>
    <property type="evidence" value="ECO:0007669"/>
    <property type="project" value="UniProtKB-UniRule"/>
</dbReference>
<dbReference type="GO" id="GO:0003700">
    <property type="term" value="F:DNA-binding transcription factor activity"/>
    <property type="evidence" value="ECO:0007669"/>
    <property type="project" value="TreeGrafter"/>
</dbReference>
<dbReference type="GO" id="GO:0000976">
    <property type="term" value="F:transcription cis-regulatory region binding"/>
    <property type="evidence" value="ECO:0007669"/>
    <property type="project" value="TreeGrafter"/>
</dbReference>
<dbReference type="GO" id="GO:0051301">
    <property type="term" value="P:cell division"/>
    <property type="evidence" value="ECO:0007669"/>
    <property type="project" value="UniProtKB-KW"/>
</dbReference>
<dbReference type="GO" id="GO:0010974">
    <property type="term" value="P:negative regulation of division septum assembly"/>
    <property type="evidence" value="ECO:0007669"/>
    <property type="project" value="InterPro"/>
</dbReference>
<dbReference type="Gene3D" id="1.10.357.10">
    <property type="entry name" value="Tetracycline Repressor, domain 2"/>
    <property type="match status" value="1"/>
</dbReference>
<dbReference type="HAMAP" id="MF_01839">
    <property type="entry name" value="NO_factor_SlmA"/>
    <property type="match status" value="1"/>
</dbReference>
<dbReference type="InterPro" id="IPR009057">
    <property type="entry name" value="Homeodomain-like_sf"/>
</dbReference>
<dbReference type="InterPro" id="IPR050109">
    <property type="entry name" value="HTH-type_TetR-like_transc_reg"/>
</dbReference>
<dbReference type="InterPro" id="IPR001647">
    <property type="entry name" value="HTH_TetR"/>
</dbReference>
<dbReference type="InterPro" id="IPR023769">
    <property type="entry name" value="NO_SlmA"/>
</dbReference>
<dbReference type="InterPro" id="IPR054580">
    <property type="entry name" value="SlmA-like_C"/>
</dbReference>
<dbReference type="InterPro" id="IPR036271">
    <property type="entry name" value="Tet_transcr_reg_TetR-rel_C_sf"/>
</dbReference>
<dbReference type="NCBIfam" id="NF007015">
    <property type="entry name" value="PRK09480.1"/>
    <property type="match status" value="1"/>
</dbReference>
<dbReference type="PANTHER" id="PTHR30055">
    <property type="entry name" value="HTH-TYPE TRANSCRIPTIONAL REGULATOR RUTR"/>
    <property type="match status" value="1"/>
</dbReference>
<dbReference type="PANTHER" id="PTHR30055:SF183">
    <property type="entry name" value="NUCLEOID OCCLUSION FACTOR SLMA"/>
    <property type="match status" value="1"/>
</dbReference>
<dbReference type="Pfam" id="PF22276">
    <property type="entry name" value="SlmA-like_C"/>
    <property type="match status" value="1"/>
</dbReference>
<dbReference type="Pfam" id="PF00440">
    <property type="entry name" value="TetR_N"/>
    <property type="match status" value="1"/>
</dbReference>
<dbReference type="SUPFAM" id="SSF46689">
    <property type="entry name" value="Homeodomain-like"/>
    <property type="match status" value="1"/>
</dbReference>
<dbReference type="SUPFAM" id="SSF48498">
    <property type="entry name" value="Tetracyclin repressor-like, C-terminal domain"/>
    <property type="match status" value="1"/>
</dbReference>
<dbReference type="PROSITE" id="PS50977">
    <property type="entry name" value="HTH_TETR_2"/>
    <property type="match status" value="1"/>
</dbReference>
<proteinExistence type="inferred from homology"/>
<sequence length="196" mass="22776">MAGSKKSNRREEILQALAHMLESAEGASRITTAKLAQQVGVSEAALYRHFPSKARMFEGLIEFIEEALMSRINRILDEEKDTLERIRLVLQLLLAFAERNPGLTRIMSGHALMFENERLRDRINQLFERIETQLRQILRERKLREGKSFPVEEKILAAQLLGQVEGSLNRFVRSDFKYQPTENFEEYWALLSAQIK</sequence>
<keyword id="KW-0131">Cell cycle</keyword>
<keyword id="KW-0132">Cell division</keyword>
<keyword id="KW-0175">Coiled coil</keyword>
<keyword id="KW-0963">Cytoplasm</keyword>
<keyword id="KW-0238">DNA-binding</keyword>
<organism>
    <name type="scientific">Vibrio vulnificus (strain CMCP6)</name>
    <dbReference type="NCBI Taxonomy" id="216895"/>
    <lineage>
        <taxon>Bacteria</taxon>
        <taxon>Pseudomonadati</taxon>
        <taxon>Pseudomonadota</taxon>
        <taxon>Gammaproteobacteria</taxon>
        <taxon>Vibrionales</taxon>
        <taxon>Vibrionaceae</taxon>
        <taxon>Vibrio</taxon>
    </lineage>
</organism>
<evidence type="ECO:0000255" key="1">
    <source>
        <dbReference type="HAMAP-Rule" id="MF_01839"/>
    </source>
</evidence>
<comment type="function">
    <text evidence="1">Required for nucleoid occlusion (NO) phenomenon, which prevents Z-ring formation and cell division over the nucleoid. Acts as a DNA-associated cell division inhibitor that binds simultaneously chromosomal DNA and FtsZ, and disrupts the assembly of FtsZ polymers. SlmA-DNA-binding sequences (SBS) are dispersed on non-Ter regions of the chromosome, preventing FtsZ polymerization at these regions.</text>
</comment>
<comment type="subunit">
    <text evidence="1">Homodimer. Interacts with FtsZ.</text>
</comment>
<comment type="subcellular location">
    <subcellularLocation>
        <location evidence="1">Cytoplasm</location>
        <location evidence="1">Nucleoid</location>
    </subcellularLocation>
</comment>
<comment type="similarity">
    <text evidence="1">Belongs to the nucleoid occlusion factor SlmA family.</text>
</comment>
<gene>
    <name evidence="1" type="primary">slmA</name>
    <name type="ordered locus">VV1_0829</name>
</gene>
<name>SLMA_VIBVU</name>
<protein>
    <recommendedName>
        <fullName evidence="1">Nucleoid occlusion factor SlmA</fullName>
    </recommendedName>
</protein>
<reference key="1">
    <citation type="submission" date="2002-12" db="EMBL/GenBank/DDBJ databases">
        <title>Complete genome sequence of Vibrio vulnificus CMCP6.</title>
        <authorList>
            <person name="Rhee J.H."/>
            <person name="Kim S.Y."/>
            <person name="Chung S.S."/>
            <person name="Kim J.J."/>
            <person name="Moon Y.H."/>
            <person name="Jeong H."/>
            <person name="Choy H.E."/>
        </authorList>
    </citation>
    <scope>NUCLEOTIDE SEQUENCE [LARGE SCALE GENOMIC DNA]</scope>
    <source>
        <strain>CMCP6</strain>
    </source>
</reference>
<feature type="chain" id="PRO_0000198986" description="Nucleoid occlusion factor SlmA">
    <location>
        <begin position="1"/>
        <end position="196"/>
    </location>
</feature>
<feature type="domain" description="HTH tetR-type" evidence="1">
    <location>
        <begin position="7"/>
        <end position="68"/>
    </location>
</feature>
<feature type="DNA-binding region" description="H-T-H motif" evidence="1">
    <location>
        <begin position="31"/>
        <end position="50"/>
    </location>
</feature>
<feature type="coiled-coil region" evidence="1">
    <location>
        <begin position="65"/>
        <end position="142"/>
    </location>
</feature>